<keyword id="KW-0997">Cell inner membrane</keyword>
<keyword id="KW-1003">Cell membrane</keyword>
<keyword id="KW-0472">Membrane</keyword>
<keyword id="KW-0520">NAD</keyword>
<keyword id="KW-0874">Quinone</keyword>
<keyword id="KW-1278">Translocase</keyword>
<keyword id="KW-0812">Transmembrane</keyword>
<keyword id="KW-1133">Transmembrane helix</keyword>
<keyword id="KW-0813">Transport</keyword>
<keyword id="KW-0830">Ubiquinone</keyword>
<proteinExistence type="inferred from homology"/>
<accession>B5R2Z7</accession>
<gene>
    <name evidence="1" type="primary">nuoN</name>
    <name type="ordered locus">SEN2298</name>
</gene>
<sequence length="485" mass="52013">MTITPQHLIALLPLLIVGLTVVVVMLSIAWRRNHFLNATLSVIGLNAALVSLWFVGQAGAMDVTPLMRVDGFAMLYTGLVLLASLATCTFAYPWLEGYNDNQEEFYLLVLIASLGGILLANANHLAALFLGIELISLPLFGLIGYAFRQKRSLEASIKYTILSAAASSFLLFGMALVYAQSGNLSFEALGKSLGDGMLHEPLLLAGFGLMIVGLGFKLSLVPFHLWTPDVYQGAPAPVSTFLATASKIAIFGVVMRLFLYAPVGDSEAVRVVLGIIAFASIIFGNLMALSQTNIKRLLGYSSISHLGYLLVALIALQSGEMSMEAVGVYLAGYLFSSLGAFGVVSLMSSPFRGPDADSLYSYRGLFWHRPVLAAVMTVMMLSLAGIPMTLGFIGKFYVLAVGVQASLWWLVAAVVVGSAIGLYYYLRVAVSLYLHAPQQPGRDAPTNWQYSAGGIVVLISALLVLVLGVWPQPLISLVQLAMPLM</sequence>
<evidence type="ECO:0000255" key="1">
    <source>
        <dbReference type="HAMAP-Rule" id="MF_00445"/>
    </source>
</evidence>
<organism>
    <name type="scientific">Salmonella enteritidis PT4 (strain P125109)</name>
    <dbReference type="NCBI Taxonomy" id="550537"/>
    <lineage>
        <taxon>Bacteria</taxon>
        <taxon>Pseudomonadati</taxon>
        <taxon>Pseudomonadota</taxon>
        <taxon>Gammaproteobacteria</taxon>
        <taxon>Enterobacterales</taxon>
        <taxon>Enterobacteriaceae</taxon>
        <taxon>Salmonella</taxon>
    </lineage>
</organism>
<name>NUON_SALEP</name>
<reference key="1">
    <citation type="journal article" date="2008" name="Genome Res.">
        <title>Comparative genome analysis of Salmonella enteritidis PT4 and Salmonella gallinarum 287/91 provides insights into evolutionary and host adaptation pathways.</title>
        <authorList>
            <person name="Thomson N.R."/>
            <person name="Clayton D.J."/>
            <person name="Windhorst D."/>
            <person name="Vernikos G."/>
            <person name="Davidson S."/>
            <person name="Churcher C."/>
            <person name="Quail M.A."/>
            <person name="Stevens M."/>
            <person name="Jones M.A."/>
            <person name="Watson M."/>
            <person name="Barron A."/>
            <person name="Layton A."/>
            <person name="Pickard D."/>
            <person name="Kingsley R.A."/>
            <person name="Bignell A."/>
            <person name="Clark L."/>
            <person name="Harris B."/>
            <person name="Ormond D."/>
            <person name="Abdellah Z."/>
            <person name="Brooks K."/>
            <person name="Cherevach I."/>
            <person name="Chillingworth T."/>
            <person name="Woodward J."/>
            <person name="Norberczak H."/>
            <person name="Lord A."/>
            <person name="Arrowsmith C."/>
            <person name="Jagels K."/>
            <person name="Moule S."/>
            <person name="Mungall K."/>
            <person name="Saunders M."/>
            <person name="Whitehead S."/>
            <person name="Chabalgoity J.A."/>
            <person name="Maskell D."/>
            <person name="Humphreys T."/>
            <person name="Roberts M."/>
            <person name="Barrow P.A."/>
            <person name="Dougan G."/>
            <person name="Parkhill J."/>
        </authorList>
    </citation>
    <scope>NUCLEOTIDE SEQUENCE [LARGE SCALE GENOMIC DNA]</scope>
    <source>
        <strain>P125109</strain>
    </source>
</reference>
<protein>
    <recommendedName>
        <fullName evidence="1">NADH-quinone oxidoreductase subunit N</fullName>
        <ecNumber evidence="1">7.1.1.-</ecNumber>
    </recommendedName>
    <alternativeName>
        <fullName evidence="1">NADH dehydrogenase I subunit N</fullName>
    </alternativeName>
    <alternativeName>
        <fullName evidence="1">NDH-1 subunit N</fullName>
    </alternativeName>
</protein>
<dbReference type="EC" id="7.1.1.-" evidence="1"/>
<dbReference type="EMBL" id="AM933172">
    <property type="protein sequence ID" value="CAR33882.1"/>
    <property type="molecule type" value="Genomic_DNA"/>
</dbReference>
<dbReference type="RefSeq" id="WP_000156667.1">
    <property type="nucleotide sequence ID" value="NC_011294.1"/>
</dbReference>
<dbReference type="SMR" id="B5R2Z7"/>
<dbReference type="KEGG" id="set:SEN2298"/>
<dbReference type="HOGENOM" id="CLU_007100_1_5_6"/>
<dbReference type="Proteomes" id="UP000000613">
    <property type="component" value="Chromosome"/>
</dbReference>
<dbReference type="GO" id="GO:0005886">
    <property type="term" value="C:plasma membrane"/>
    <property type="evidence" value="ECO:0007669"/>
    <property type="project" value="UniProtKB-SubCell"/>
</dbReference>
<dbReference type="GO" id="GO:0008137">
    <property type="term" value="F:NADH dehydrogenase (ubiquinone) activity"/>
    <property type="evidence" value="ECO:0007669"/>
    <property type="project" value="InterPro"/>
</dbReference>
<dbReference type="GO" id="GO:0050136">
    <property type="term" value="F:NADH:ubiquinone reductase (non-electrogenic) activity"/>
    <property type="evidence" value="ECO:0007669"/>
    <property type="project" value="UniProtKB-UniRule"/>
</dbReference>
<dbReference type="GO" id="GO:0048038">
    <property type="term" value="F:quinone binding"/>
    <property type="evidence" value="ECO:0007669"/>
    <property type="project" value="UniProtKB-KW"/>
</dbReference>
<dbReference type="GO" id="GO:0042773">
    <property type="term" value="P:ATP synthesis coupled electron transport"/>
    <property type="evidence" value="ECO:0007669"/>
    <property type="project" value="InterPro"/>
</dbReference>
<dbReference type="HAMAP" id="MF_00445">
    <property type="entry name" value="NDH1_NuoN_1"/>
    <property type="match status" value="1"/>
</dbReference>
<dbReference type="InterPro" id="IPR010096">
    <property type="entry name" value="NADH-Q_OxRdtase_suN/2"/>
</dbReference>
<dbReference type="InterPro" id="IPR001750">
    <property type="entry name" value="ND/Mrp_TM"/>
</dbReference>
<dbReference type="NCBIfam" id="TIGR01770">
    <property type="entry name" value="NDH_I_N"/>
    <property type="match status" value="1"/>
</dbReference>
<dbReference type="NCBIfam" id="NF004439">
    <property type="entry name" value="PRK05777.1-1"/>
    <property type="match status" value="1"/>
</dbReference>
<dbReference type="PANTHER" id="PTHR22773">
    <property type="entry name" value="NADH DEHYDROGENASE"/>
    <property type="match status" value="1"/>
</dbReference>
<dbReference type="Pfam" id="PF00361">
    <property type="entry name" value="Proton_antipo_M"/>
    <property type="match status" value="1"/>
</dbReference>
<comment type="function">
    <text evidence="1">NDH-1 shuttles electrons from NADH, via FMN and iron-sulfur (Fe-S) centers, to quinones in the respiratory chain. The immediate electron acceptor for the enzyme in this species is believed to be ubiquinone. Couples the redox reaction to proton translocation (for every two electrons transferred, four hydrogen ions are translocated across the cytoplasmic membrane), and thus conserves the redox energy in a proton gradient.</text>
</comment>
<comment type="catalytic activity">
    <reaction evidence="1">
        <text>a quinone + NADH + 5 H(+)(in) = a quinol + NAD(+) + 4 H(+)(out)</text>
        <dbReference type="Rhea" id="RHEA:57888"/>
        <dbReference type="ChEBI" id="CHEBI:15378"/>
        <dbReference type="ChEBI" id="CHEBI:24646"/>
        <dbReference type="ChEBI" id="CHEBI:57540"/>
        <dbReference type="ChEBI" id="CHEBI:57945"/>
        <dbReference type="ChEBI" id="CHEBI:132124"/>
    </reaction>
</comment>
<comment type="subunit">
    <text evidence="1">NDH-1 is composed of 13 different subunits. Subunits NuoA, H, J, K, L, M, N constitute the membrane sector of the complex.</text>
</comment>
<comment type="subcellular location">
    <subcellularLocation>
        <location evidence="1">Cell inner membrane</location>
        <topology evidence="1">Multi-pass membrane protein</topology>
    </subcellularLocation>
</comment>
<comment type="similarity">
    <text evidence="1">Belongs to the complex I subunit 2 family.</text>
</comment>
<feature type="chain" id="PRO_1000145875" description="NADH-quinone oxidoreductase subunit N">
    <location>
        <begin position="1"/>
        <end position="485"/>
    </location>
</feature>
<feature type="transmembrane region" description="Helical" evidence="1">
    <location>
        <begin position="8"/>
        <end position="28"/>
    </location>
</feature>
<feature type="transmembrane region" description="Helical" evidence="1">
    <location>
        <begin position="35"/>
        <end position="55"/>
    </location>
</feature>
<feature type="transmembrane region" description="Helical" evidence="1">
    <location>
        <begin position="71"/>
        <end position="91"/>
    </location>
</feature>
<feature type="transmembrane region" description="Helical" evidence="1">
    <location>
        <begin position="105"/>
        <end position="125"/>
    </location>
</feature>
<feature type="transmembrane region" description="Helical" evidence="1">
    <location>
        <begin position="127"/>
        <end position="147"/>
    </location>
</feature>
<feature type="transmembrane region" description="Helical" evidence="1">
    <location>
        <begin position="159"/>
        <end position="179"/>
    </location>
</feature>
<feature type="transmembrane region" description="Helical" evidence="1">
    <location>
        <begin position="203"/>
        <end position="223"/>
    </location>
</feature>
<feature type="transmembrane region" description="Helical" evidence="1">
    <location>
        <begin position="235"/>
        <end position="255"/>
    </location>
</feature>
<feature type="transmembrane region" description="Helical" evidence="1">
    <location>
        <begin position="271"/>
        <end position="291"/>
    </location>
</feature>
<feature type="transmembrane region" description="Helical" evidence="1">
    <location>
        <begin position="297"/>
        <end position="317"/>
    </location>
</feature>
<feature type="transmembrane region" description="Helical" evidence="1">
    <location>
        <begin position="326"/>
        <end position="346"/>
    </location>
</feature>
<feature type="transmembrane region" description="Helical" evidence="1">
    <location>
        <begin position="373"/>
        <end position="393"/>
    </location>
</feature>
<feature type="transmembrane region" description="Helical" evidence="1">
    <location>
        <begin position="408"/>
        <end position="430"/>
    </location>
</feature>
<feature type="transmembrane region" description="Helical" evidence="1">
    <location>
        <begin position="455"/>
        <end position="475"/>
    </location>
</feature>